<comment type="function">
    <text evidence="1">Presumably involved in the processing and regular turnover of intracellular proteins. Catalyzes the removal of unsubstituted N-terminal amino acids from various peptides.</text>
</comment>
<comment type="catalytic activity">
    <reaction evidence="1">
        <text>Release of an N-terminal amino acid, Xaa-|-Yaa-, in which Xaa is preferably Leu, but may be other amino acids including Pro although not Arg or Lys, and Yaa may be Pro. Amino acid amides and methyl esters are also readily hydrolyzed, but rates on arylamides are exceedingly low.</text>
        <dbReference type="EC" id="3.4.11.1"/>
    </reaction>
</comment>
<comment type="catalytic activity">
    <reaction evidence="1">
        <text>Release of an N-terminal amino acid, preferentially leucine, but not glutamic or aspartic acids.</text>
        <dbReference type="EC" id="3.4.11.10"/>
    </reaction>
</comment>
<comment type="cofactor">
    <cofactor evidence="1">
        <name>Mn(2+)</name>
        <dbReference type="ChEBI" id="CHEBI:29035"/>
    </cofactor>
    <text evidence="1">Binds 2 manganese ions per subunit.</text>
</comment>
<comment type="subcellular location">
    <subcellularLocation>
        <location evidence="1">Cytoplasm</location>
    </subcellularLocation>
</comment>
<comment type="similarity">
    <text evidence="1">Belongs to the peptidase M17 family.</text>
</comment>
<accession>Q5QY05</accession>
<organism>
    <name type="scientific">Idiomarina loihiensis (strain ATCC BAA-735 / DSM 15497 / L2-TR)</name>
    <dbReference type="NCBI Taxonomy" id="283942"/>
    <lineage>
        <taxon>Bacteria</taxon>
        <taxon>Pseudomonadati</taxon>
        <taxon>Pseudomonadota</taxon>
        <taxon>Gammaproteobacteria</taxon>
        <taxon>Alteromonadales</taxon>
        <taxon>Idiomarinaceae</taxon>
        <taxon>Idiomarina</taxon>
    </lineage>
</organism>
<feature type="chain" id="PRO_1000019929" description="Probable cytosol aminopeptidase">
    <location>
        <begin position="1"/>
        <end position="501"/>
    </location>
</feature>
<feature type="active site" evidence="1">
    <location>
        <position position="280"/>
    </location>
</feature>
<feature type="active site" evidence="1">
    <location>
        <position position="354"/>
    </location>
</feature>
<feature type="binding site" evidence="1">
    <location>
        <position position="268"/>
    </location>
    <ligand>
        <name>Mn(2+)</name>
        <dbReference type="ChEBI" id="CHEBI:29035"/>
        <label>2</label>
    </ligand>
</feature>
<feature type="binding site" evidence="1">
    <location>
        <position position="273"/>
    </location>
    <ligand>
        <name>Mn(2+)</name>
        <dbReference type="ChEBI" id="CHEBI:29035"/>
        <label>1</label>
    </ligand>
</feature>
<feature type="binding site" evidence="1">
    <location>
        <position position="273"/>
    </location>
    <ligand>
        <name>Mn(2+)</name>
        <dbReference type="ChEBI" id="CHEBI:29035"/>
        <label>2</label>
    </ligand>
</feature>
<feature type="binding site" evidence="1">
    <location>
        <position position="291"/>
    </location>
    <ligand>
        <name>Mn(2+)</name>
        <dbReference type="ChEBI" id="CHEBI:29035"/>
        <label>2</label>
    </ligand>
</feature>
<feature type="binding site" evidence="1">
    <location>
        <position position="350"/>
    </location>
    <ligand>
        <name>Mn(2+)</name>
        <dbReference type="ChEBI" id="CHEBI:29035"/>
        <label>1</label>
    </ligand>
</feature>
<feature type="binding site" evidence="1">
    <location>
        <position position="352"/>
    </location>
    <ligand>
        <name>Mn(2+)</name>
        <dbReference type="ChEBI" id="CHEBI:29035"/>
        <label>1</label>
    </ligand>
</feature>
<feature type="binding site" evidence="1">
    <location>
        <position position="352"/>
    </location>
    <ligand>
        <name>Mn(2+)</name>
        <dbReference type="ChEBI" id="CHEBI:29035"/>
        <label>2</label>
    </ligand>
</feature>
<proteinExistence type="inferred from homology"/>
<name>AMPA_IDILO</name>
<evidence type="ECO:0000255" key="1">
    <source>
        <dbReference type="HAMAP-Rule" id="MF_00181"/>
    </source>
</evidence>
<reference key="1">
    <citation type="journal article" date="2004" name="Proc. Natl. Acad. Sci. U.S.A.">
        <title>Genome sequence of the deep-sea gamma-proteobacterium Idiomarina loihiensis reveals amino acid fermentation as a source of carbon and energy.</title>
        <authorList>
            <person name="Hou S."/>
            <person name="Saw J.H."/>
            <person name="Lee K.S."/>
            <person name="Freitas T.A."/>
            <person name="Belisle C."/>
            <person name="Kawarabayasi Y."/>
            <person name="Donachie S.P."/>
            <person name="Pikina A."/>
            <person name="Galperin M.Y."/>
            <person name="Koonin E.V."/>
            <person name="Makarova K.S."/>
            <person name="Omelchenko M.V."/>
            <person name="Sorokin A."/>
            <person name="Wolf Y.I."/>
            <person name="Li Q.X."/>
            <person name="Keum Y.S."/>
            <person name="Campbell S."/>
            <person name="Denery J."/>
            <person name="Aizawa S."/>
            <person name="Shibata S."/>
            <person name="Malahoff A."/>
            <person name="Alam M."/>
        </authorList>
    </citation>
    <scope>NUCLEOTIDE SEQUENCE [LARGE SCALE GENOMIC DNA]</scope>
    <source>
        <strain>ATCC BAA-735 / DSM 15497 / L2-TR</strain>
    </source>
</reference>
<gene>
    <name evidence="1" type="primary">pepA</name>
    <name type="ordered locus">IL1948</name>
</gene>
<protein>
    <recommendedName>
        <fullName evidence="1">Probable cytosol aminopeptidase</fullName>
        <ecNumber evidence="1">3.4.11.1</ecNumber>
    </recommendedName>
    <alternativeName>
        <fullName evidence="1">Leucine aminopeptidase</fullName>
        <shortName evidence="1">LAP</shortName>
        <ecNumber evidence="1">3.4.11.10</ecNumber>
    </alternativeName>
    <alternativeName>
        <fullName evidence="1">Leucyl aminopeptidase</fullName>
    </alternativeName>
</protein>
<dbReference type="EC" id="3.4.11.1" evidence="1"/>
<dbReference type="EC" id="3.4.11.10" evidence="1"/>
<dbReference type="EMBL" id="AE017340">
    <property type="protein sequence ID" value="AAV82780.1"/>
    <property type="molecule type" value="Genomic_DNA"/>
</dbReference>
<dbReference type="RefSeq" id="WP_011235176.1">
    <property type="nucleotide sequence ID" value="NC_006512.1"/>
</dbReference>
<dbReference type="SMR" id="Q5QY05"/>
<dbReference type="STRING" id="283942.IL1948"/>
<dbReference type="MEROPS" id="M17.003"/>
<dbReference type="GeneID" id="41337138"/>
<dbReference type="KEGG" id="ilo:IL1948"/>
<dbReference type="eggNOG" id="COG0260">
    <property type="taxonomic scope" value="Bacteria"/>
</dbReference>
<dbReference type="HOGENOM" id="CLU_013734_2_2_6"/>
<dbReference type="OrthoDB" id="9809354at2"/>
<dbReference type="Proteomes" id="UP000001171">
    <property type="component" value="Chromosome"/>
</dbReference>
<dbReference type="GO" id="GO:0005737">
    <property type="term" value="C:cytoplasm"/>
    <property type="evidence" value="ECO:0007669"/>
    <property type="project" value="UniProtKB-SubCell"/>
</dbReference>
<dbReference type="GO" id="GO:0030145">
    <property type="term" value="F:manganese ion binding"/>
    <property type="evidence" value="ECO:0007669"/>
    <property type="project" value="UniProtKB-UniRule"/>
</dbReference>
<dbReference type="GO" id="GO:0070006">
    <property type="term" value="F:metalloaminopeptidase activity"/>
    <property type="evidence" value="ECO:0007669"/>
    <property type="project" value="InterPro"/>
</dbReference>
<dbReference type="GO" id="GO:0006508">
    <property type="term" value="P:proteolysis"/>
    <property type="evidence" value="ECO:0007669"/>
    <property type="project" value="UniProtKB-KW"/>
</dbReference>
<dbReference type="CDD" id="cd00433">
    <property type="entry name" value="Peptidase_M17"/>
    <property type="match status" value="1"/>
</dbReference>
<dbReference type="FunFam" id="3.40.220.10:FF:000001">
    <property type="entry name" value="Probable cytosol aminopeptidase"/>
    <property type="match status" value="1"/>
</dbReference>
<dbReference type="FunFam" id="3.40.630.10:FF:000004">
    <property type="entry name" value="Probable cytosol aminopeptidase"/>
    <property type="match status" value="1"/>
</dbReference>
<dbReference type="Gene3D" id="3.40.220.10">
    <property type="entry name" value="Leucine Aminopeptidase, subunit E, domain 1"/>
    <property type="match status" value="1"/>
</dbReference>
<dbReference type="Gene3D" id="3.40.630.10">
    <property type="entry name" value="Zn peptidases"/>
    <property type="match status" value="1"/>
</dbReference>
<dbReference type="HAMAP" id="MF_00181">
    <property type="entry name" value="Cytosol_peptidase_M17"/>
    <property type="match status" value="1"/>
</dbReference>
<dbReference type="InterPro" id="IPR011356">
    <property type="entry name" value="Leucine_aapep/pepB"/>
</dbReference>
<dbReference type="InterPro" id="IPR043472">
    <property type="entry name" value="Macro_dom-like"/>
</dbReference>
<dbReference type="InterPro" id="IPR000819">
    <property type="entry name" value="Peptidase_M17_C"/>
</dbReference>
<dbReference type="InterPro" id="IPR023042">
    <property type="entry name" value="Peptidase_M17_leu_NH2_pept"/>
</dbReference>
<dbReference type="InterPro" id="IPR008283">
    <property type="entry name" value="Peptidase_M17_N"/>
</dbReference>
<dbReference type="NCBIfam" id="NF002072">
    <property type="entry name" value="PRK00913.1-1"/>
    <property type="match status" value="1"/>
</dbReference>
<dbReference type="NCBIfam" id="NF002073">
    <property type="entry name" value="PRK00913.1-2"/>
    <property type="match status" value="1"/>
</dbReference>
<dbReference type="NCBIfam" id="NF002074">
    <property type="entry name" value="PRK00913.1-4"/>
    <property type="match status" value="1"/>
</dbReference>
<dbReference type="PANTHER" id="PTHR11963:SF23">
    <property type="entry name" value="CYTOSOL AMINOPEPTIDASE"/>
    <property type="match status" value="1"/>
</dbReference>
<dbReference type="PANTHER" id="PTHR11963">
    <property type="entry name" value="LEUCINE AMINOPEPTIDASE-RELATED"/>
    <property type="match status" value="1"/>
</dbReference>
<dbReference type="Pfam" id="PF00883">
    <property type="entry name" value="Peptidase_M17"/>
    <property type="match status" value="1"/>
</dbReference>
<dbReference type="Pfam" id="PF02789">
    <property type="entry name" value="Peptidase_M17_N"/>
    <property type="match status" value="1"/>
</dbReference>
<dbReference type="PRINTS" id="PR00481">
    <property type="entry name" value="LAMNOPPTDASE"/>
</dbReference>
<dbReference type="SUPFAM" id="SSF52949">
    <property type="entry name" value="Macro domain-like"/>
    <property type="match status" value="1"/>
</dbReference>
<dbReference type="SUPFAM" id="SSF53187">
    <property type="entry name" value="Zn-dependent exopeptidases"/>
    <property type="match status" value="1"/>
</dbReference>
<dbReference type="PROSITE" id="PS00631">
    <property type="entry name" value="CYTOSOL_AP"/>
    <property type="match status" value="1"/>
</dbReference>
<keyword id="KW-0031">Aminopeptidase</keyword>
<keyword id="KW-0963">Cytoplasm</keyword>
<keyword id="KW-0378">Hydrolase</keyword>
<keyword id="KW-0464">Manganese</keyword>
<keyword id="KW-0479">Metal-binding</keyword>
<keyword id="KW-0645">Protease</keyword>
<keyword id="KW-1185">Reference proteome</keyword>
<sequence>MEFSVKSGNPEKQRSACIVVGVFEPRRLSGVAEQLDKVSDGYLSNLLRRGDLEGKSGQVLLLHHVPNILAERVLLVGCGKERELDERQYRQIIARTMNTLNETGSMEAVCFLSELHVKGRDTYWKVRQAVESARATLYNFNELKSKKEEPRRPLRKLVFNVPSRKELALGEQAVQHALAVATGMDICRNVANMPPNICTPRYLADQAKLMADNYDNLTVATVEEAEMEKLGMNAYLAVGRGSEHESVLTLMHYKGAADDQAPIVLVGKGLTFDSGGISIKPSANMDEMKYDMGGAAGVLGAMQALAELQLPINVIGTVAGCENMPDGKAYRPGDILTTMSGQTVEVLNTDAEGRLVLCDTLTYIERFEPESVIDLATLTGACVIALGSHASAVLSQHNPLAHEILNAAQQSGDKAWRMPLWDEYQSMLDSPFADMANIGGREAGTITAACFLSRYTKKYNWAHMDIAGTAWQGGKDKGSTGRPVPLLTQFLINRCNTEAAE</sequence>